<protein>
    <recommendedName>
        <fullName evidence="1">Periplasmic nitrate reductase</fullName>
        <ecNumber evidence="1">1.9.6.1</ecNumber>
    </recommendedName>
</protein>
<sequence>MKLSRRSFMKANAVAAAAAAAGLSVPGVARAVVGQQEAIKWDKAPCRFCGTGCGVLVGTQQGRVVACQGDPDAPVNRGLNCIKGYFLPKIMYGKDRLTQPMLRMKDGSYHKDGEFTPVSWEQAFDVMEEKFKTSLKEKGPEAIGMFGSGQWTIWEGYAAAKLFKAGFRSNNIDPNARHCMASAVVGFMRTFGMDEPMGCYDDIEQADAFVLWGSNMAEMHPILWSRITNRRLSDPNVKVAVLSTFQHRSFELADNGIVFTPQSDLVILNYIANYIIQNNAVNQDFFTKHVNLRKGATDIGYGLRPTHPLEKAAKNPGSDASEPMSFDEYKAFVAEYTLDKTAEMTGVPKDQLEQLAQLYADPNKRVISYWTMGFNQHTRGVWANNLVYNLHLLTGKISQPGCGPFSLTGQPSACGTAREVGTFSHRLPADMVVTNEKHRDICEKHWQIPAGTIPAKVGLHAVAQDRALKDGKLNVYWVMCNNNMQAGPNINEDRMPGWRDPRNFIIVSDPYPTVSALSADLILPTAMWVEKEGAYGNAERRTQFWRQQIKAPGEAKSDLWQLVQFSRRFKTEEVWPEALLAQKPELRGKTLYDVLFATPAVSKFPLSELKEDQLNDESRELGFYLQKGLFEEYAWFGRGHGHDLAPFDDYHNARGLRWPVVEGKETQWRYSEGNDPYVKAGEGYKFYGKPDGKAVIFALPFEPAAESPDNEYDLWLSTGRVLEHWHTGSMTRRVPELHRAFPEAVVFIHPLDAKARDLRRGDKVKVSSRRGEVISIVETRGRNRPPQGLVYMPFFDAAQLVNNLTLDATDPLSKETDFKKCAVKLAKV</sequence>
<proteinExistence type="inferred from homology"/>
<name>NAPA_SALTY</name>
<organism>
    <name type="scientific">Salmonella typhimurium (strain LT2 / SGSC1412 / ATCC 700720)</name>
    <dbReference type="NCBI Taxonomy" id="99287"/>
    <lineage>
        <taxon>Bacteria</taxon>
        <taxon>Pseudomonadati</taxon>
        <taxon>Pseudomonadota</taxon>
        <taxon>Gammaproteobacteria</taxon>
        <taxon>Enterobacterales</taxon>
        <taxon>Enterobacteriaceae</taxon>
        <taxon>Salmonella</taxon>
    </lineage>
</organism>
<gene>
    <name evidence="1" type="primary">napA</name>
    <name type="ordered locus">STM2259</name>
</gene>
<evidence type="ECO:0000255" key="1">
    <source>
        <dbReference type="HAMAP-Rule" id="MF_01630"/>
    </source>
</evidence>
<keyword id="KW-0004">4Fe-4S</keyword>
<keyword id="KW-0249">Electron transport</keyword>
<keyword id="KW-0408">Iron</keyword>
<keyword id="KW-0411">Iron-sulfur</keyword>
<keyword id="KW-0479">Metal-binding</keyword>
<keyword id="KW-0500">Molybdenum</keyword>
<keyword id="KW-0534">Nitrate assimilation</keyword>
<keyword id="KW-0560">Oxidoreductase</keyword>
<keyword id="KW-0574">Periplasm</keyword>
<keyword id="KW-1185">Reference proteome</keyword>
<keyword id="KW-0732">Signal</keyword>
<keyword id="KW-0813">Transport</keyword>
<feature type="signal peptide" description="Tat-type signal" evidence="1">
    <location>
        <begin position="1"/>
        <end position="31"/>
    </location>
</feature>
<feature type="chain" id="PRO_0000046002" description="Periplasmic nitrate reductase" evidence="1">
    <location>
        <begin position="32"/>
        <end position="828"/>
    </location>
</feature>
<feature type="domain" description="4Fe-4S Mo/W bis-MGD-type" evidence="1">
    <location>
        <begin position="39"/>
        <end position="95"/>
    </location>
</feature>
<feature type="binding site" evidence="1">
    <location>
        <position position="46"/>
    </location>
    <ligand>
        <name>[4Fe-4S] cluster</name>
        <dbReference type="ChEBI" id="CHEBI:49883"/>
    </ligand>
</feature>
<feature type="binding site" evidence="1">
    <location>
        <position position="49"/>
    </location>
    <ligand>
        <name>[4Fe-4S] cluster</name>
        <dbReference type="ChEBI" id="CHEBI:49883"/>
    </ligand>
</feature>
<feature type="binding site" evidence="1">
    <location>
        <position position="53"/>
    </location>
    <ligand>
        <name>[4Fe-4S] cluster</name>
        <dbReference type="ChEBI" id="CHEBI:49883"/>
    </ligand>
</feature>
<feature type="binding site" evidence="1">
    <location>
        <position position="81"/>
    </location>
    <ligand>
        <name>[4Fe-4S] cluster</name>
        <dbReference type="ChEBI" id="CHEBI:49883"/>
    </ligand>
</feature>
<feature type="binding site" evidence="1">
    <location>
        <position position="83"/>
    </location>
    <ligand>
        <name>Mo-bis(molybdopterin guanine dinucleotide)</name>
        <dbReference type="ChEBI" id="CHEBI:60539"/>
    </ligand>
</feature>
<feature type="binding site" evidence="1">
    <location>
        <position position="150"/>
    </location>
    <ligand>
        <name>Mo-bis(molybdopterin guanine dinucleotide)</name>
        <dbReference type="ChEBI" id="CHEBI:60539"/>
    </ligand>
</feature>
<feature type="binding site" evidence="1">
    <location>
        <position position="175"/>
    </location>
    <ligand>
        <name>Mo-bis(molybdopterin guanine dinucleotide)</name>
        <dbReference type="ChEBI" id="CHEBI:60539"/>
    </ligand>
</feature>
<feature type="binding site" evidence="1">
    <location>
        <position position="179"/>
    </location>
    <ligand>
        <name>Mo-bis(molybdopterin guanine dinucleotide)</name>
        <dbReference type="ChEBI" id="CHEBI:60539"/>
    </ligand>
</feature>
<feature type="binding site" evidence="1">
    <location>
        <begin position="212"/>
        <end position="219"/>
    </location>
    <ligand>
        <name>Mo-bis(molybdopterin guanine dinucleotide)</name>
        <dbReference type="ChEBI" id="CHEBI:60539"/>
    </ligand>
</feature>
<feature type="binding site" evidence="1">
    <location>
        <begin position="243"/>
        <end position="247"/>
    </location>
    <ligand>
        <name>Mo-bis(molybdopterin guanine dinucleotide)</name>
        <dbReference type="ChEBI" id="CHEBI:60539"/>
    </ligand>
</feature>
<feature type="binding site" evidence="1">
    <location>
        <begin position="262"/>
        <end position="264"/>
    </location>
    <ligand>
        <name>Mo-bis(molybdopterin guanine dinucleotide)</name>
        <dbReference type="ChEBI" id="CHEBI:60539"/>
    </ligand>
</feature>
<feature type="binding site" evidence="1">
    <location>
        <position position="372"/>
    </location>
    <ligand>
        <name>Mo-bis(molybdopterin guanine dinucleotide)</name>
        <dbReference type="ChEBI" id="CHEBI:60539"/>
    </ligand>
</feature>
<feature type="binding site" evidence="1">
    <location>
        <position position="376"/>
    </location>
    <ligand>
        <name>Mo-bis(molybdopterin guanine dinucleotide)</name>
        <dbReference type="ChEBI" id="CHEBI:60539"/>
    </ligand>
</feature>
<feature type="binding site" evidence="1">
    <location>
        <position position="482"/>
    </location>
    <ligand>
        <name>Mo-bis(molybdopterin guanine dinucleotide)</name>
        <dbReference type="ChEBI" id="CHEBI:60539"/>
    </ligand>
</feature>
<feature type="binding site" evidence="1">
    <location>
        <begin position="508"/>
        <end position="509"/>
    </location>
    <ligand>
        <name>Mo-bis(molybdopterin guanine dinucleotide)</name>
        <dbReference type="ChEBI" id="CHEBI:60539"/>
    </ligand>
</feature>
<feature type="binding site" evidence="1">
    <location>
        <position position="531"/>
    </location>
    <ligand>
        <name>Mo-bis(molybdopterin guanine dinucleotide)</name>
        <dbReference type="ChEBI" id="CHEBI:60539"/>
    </ligand>
</feature>
<feature type="binding site" evidence="1">
    <location>
        <position position="558"/>
    </location>
    <ligand>
        <name>Mo-bis(molybdopterin guanine dinucleotide)</name>
        <dbReference type="ChEBI" id="CHEBI:60539"/>
    </ligand>
</feature>
<feature type="binding site" evidence="1">
    <location>
        <begin position="718"/>
        <end position="727"/>
    </location>
    <ligand>
        <name>Mo-bis(molybdopterin guanine dinucleotide)</name>
        <dbReference type="ChEBI" id="CHEBI:60539"/>
    </ligand>
</feature>
<feature type="binding site" evidence="1">
    <location>
        <position position="794"/>
    </location>
    <ligand>
        <name>substrate</name>
    </ligand>
</feature>
<feature type="binding site" evidence="1">
    <location>
        <position position="802"/>
    </location>
    <ligand>
        <name>Mo-bis(molybdopterin guanine dinucleotide)</name>
        <dbReference type="ChEBI" id="CHEBI:60539"/>
    </ligand>
</feature>
<feature type="binding site" evidence="1">
    <location>
        <position position="819"/>
    </location>
    <ligand>
        <name>Mo-bis(molybdopterin guanine dinucleotide)</name>
        <dbReference type="ChEBI" id="CHEBI:60539"/>
    </ligand>
</feature>
<reference key="1">
    <citation type="journal article" date="2001" name="Nature">
        <title>Complete genome sequence of Salmonella enterica serovar Typhimurium LT2.</title>
        <authorList>
            <person name="McClelland M."/>
            <person name="Sanderson K.E."/>
            <person name="Spieth J."/>
            <person name="Clifton S.W."/>
            <person name="Latreille P."/>
            <person name="Courtney L."/>
            <person name="Porwollik S."/>
            <person name="Ali J."/>
            <person name="Dante M."/>
            <person name="Du F."/>
            <person name="Hou S."/>
            <person name="Layman D."/>
            <person name="Leonard S."/>
            <person name="Nguyen C."/>
            <person name="Scott K."/>
            <person name="Holmes A."/>
            <person name="Grewal N."/>
            <person name="Mulvaney E."/>
            <person name="Ryan E."/>
            <person name="Sun H."/>
            <person name="Florea L."/>
            <person name="Miller W."/>
            <person name="Stoneking T."/>
            <person name="Nhan M."/>
            <person name="Waterston R."/>
            <person name="Wilson R.K."/>
        </authorList>
    </citation>
    <scope>NUCLEOTIDE SEQUENCE [LARGE SCALE GENOMIC DNA]</scope>
    <source>
        <strain>LT2 / SGSC1412 / ATCC 700720</strain>
    </source>
</reference>
<comment type="function">
    <text evidence="1">Catalytic subunit of the periplasmic nitrate reductase complex NapAB. Receives electrons from NapB and catalyzes the reduction of nitrate to nitrite.</text>
</comment>
<comment type="catalytic activity">
    <reaction evidence="1">
        <text>2 Fe(II)-[cytochrome] + nitrate + 2 H(+) = 2 Fe(III)-[cytochrome] + nitrite + H2O</text>
        <dbReference type="Rhea" id="RHEA:12909"/>
        <dbReference type="Rhea" id="RHEA-COMP:11777"/>
        <dbReference type="Rhea" id="RHEA-COMP:11778"/>
        <dbReference type="ChEBI" id="CHEBI:15377"/>
        <dbReference type="ChEBI" id="CHEBI:15378"/>
        <dbReference type="ChEBI" id="CHEBI:16301"/>
        <dbReference type="ChEBI" id="CHEBI:17632"/>
        <dbReference type="ChEBI" id="CHEBI:29033"/>
        <dbReference type="ChEBI" id="CHEBI:29034"/>
        <dbReference type="EC" id="1.9.6.1"/>
    </reaction>
</comment>
<comment type="cofactor">
    <cofactor evidence="1">
        <name>[4Fe-4S] cluster</name>
        <dbReference type="ChEBI" id="CHEBI:49883"/>
    </cofactor>
    <text evidence="1">Binds 1 [4Fe-4S] cluster.</text>
</comment>
<comment type="cofactor">
    <cofactor evidence="1">
        <name>Mo-bis(molybdopterin guanine dinucleotide)</name>
        <dbReference type="ChEBI" id="CHEBI:60539"/>
    </cofactor>
    <text evidence="1">Binds 1 molybdenum-bis(molybdopterin guanine dinucleotide) (Mo-bis-MGD) cofactor per subunit.</text>
</comment>
<comment type="subunit">
    <text evidence="1">Component of the periplasmic nitrate reductase NapAB complex composed of NapA and NapB.</text>
</comment>
<comment type="subcellular location">
    <subcellularLocation>
        <location evidence="1">Periplasm</location>
    </subcellularLocation>
</comment>
<comment type="PTM">
    <text evidence="1">Predicted to be exported by the Tat system. The position of the signal peptide cleavage has not been experimentally proven.</text>
</comment>
<comment type="similarity">
    <text evidence="1">Belongs to the prokaryotic molybdopterin-containing oxidoreductase family. NasA/NapA/NarB subfamily.</text>
</comment>
<dbReference type="EC" id="1.9.6.1" evidence="1"/>
<dbReference type="EMBL" id="AE006468">
    <property type="protein sequence ID" value="AAL21161.1"/>
    <property type="molecule type" value="Genomic_DNA"/>
</dbReference>
<dbReference type="RefSeq" id="NP_461202.1">
    <property type="nucleotide sequence ID" value="NC_003197.2"/>
</dbReference>
<dbReference type="RefSeq" id="WP_000778097.1">
    <property type="nucleotide sequence ID" value="NC_003197.2"/>
</dbReference>
<dbReference type="SMR" id="Q8ZNH6"/>
<dbReference type="STRING" id="99287.STM2259"/>
<dbReference type="PaxDb" id="99287-STM2259"/>
<dbReference type="GeneID" id="1253781"/>
<dbReference type="KEGG" id="stm:STM2259"/>
<dbReference type="PATRIC" id="fig|99287.12.peg.2393"/>
<dbReference type="HOGENOM" id="CLU_000422_13_4_6"/>
<dbReference type="PhylomeDB" id="Q8ZNH6"/>
<dbReference type="BioCyc" id="SENT99287:STM2259-MONOMER"/>
<dbReference type="Proteomes" id="UP000001014">
    <property type="component" value="Chromosome"/>
</dbReference>
<dbReference type="GO" id="GO:0016020">
    <property type="term" value="C:membrane"/>
    <property type="evidence" value="ECO:0000318"/>
    <property type="project" value="GO_Central"/>
</dbReference>
<dbReference type="GO" id="GO:0009325">
    <property type="term" value="C:nitrate reductase complex"/>
    <property type="evidence" value="ECO:0000318"/>
    <property type="project" value="GO_Central"/>
</dbReference>
<dbReference type="GO" id="GO:0042597">
    <property type="term" value="C:periplasmic space"/>
    <property type="evidence" value="ECO:0007669"/>
    <property type="project" value="UniProtKB-SubCell"/>
</dbReference>
<dbReference type="GO" id="GO:0051539">
    <property type="term" value="F:4 iron, 4 sulfur cluster binding"/>
    <property type="evidence" value="ECO:0007669"/>
    <property type="project" value="UniProtKB-KW"/>
</dbReference>
<dbReference type="GO" id="GO:0009055">
    <property type="term" value="F:electron transfer activity"/>
    <property type="evidence" value="ECO:0007669"/>
    <property type="project" value="UniProtKB-UniRule"/>
</dbReference>
<dbReference type="GO" id="GO:0005506">
    <property type="term" value="F:iron ion binding"/>
    <property type="evidence" value="ECO:0007669"/>
    <property type="project" value="UniProtKB-UniRule"/>
</dbReference>
<dbReference type="GO" id="GO:0030151">
    <property type="term" value="F:molybdenum ion binding"/>
    <property type="evidence" value="ECO:0000318"/>
    <property type="project" value="GO_Central"/>
</dbReference>
<dbReference type="GO" id="GO:0043546">
    <property type="term" value="F:molybdopterin cofactor binding"/>
    <property type="evidence" value="ECO:0007669"/>
    <property type="project" value="InterPro"/>
</dbReference>
<dbReference type="GO" id="GO:0050140">
    <property type="term" value="F:nitrate reductase (cytochrome) activity"/>
    <property type="evidence" value="ECO:0007669"/>
    <property type="project" value="UniProtKB-EC"/>
</dbReference>
<dbReference type="GO" id="GO:0008940">
    <property type="term" value="F:nitrate reductase activity"/>
    <property type="evidence" value="ECO:0000318"/>
    <property type="project" value="GO_Central"/>
</dbReference>
<dbReference type="GO" id="GO:0045333">
    <property type="term" value="P:cellular respiration"/>
    <property type="evidence" value="ECO:0007669"/>
    <property type="project" value="UniProtKB-ARBA"/>
</dbReference>
<dbReference type="GO" id="GO:0006777">
    <property type="term" value="P:Mo-molybdopterin cofactor biosynthetic process"/>
    <property type="evidence" value="ECO:0007669"/>
    <property type="project" value="UniProtKB-UniRule"/>
</dbReference>
<dbReference type="GO" id="GO:0042128">
    <property type="term" value="P:nitrate assimilation"/>
    <property type="evidence" value="ECO:0007669"/>
    <property type="project" value="UniProtKB-UniRule"/>
</dbReference>
<dbReference type="CDD" id="cd02791">
    <property type="entry name" value="MopB_CT_Nitrate-R-NapA-like"/>
    <property type="match status" value="1"/>
</dbReference>
<dbReference type="CDD" id="cd02754">
    <property type="entry name" value="MopB_Nitrate-R-NapA-like"/>
    <property type="match status" value="1"/>
</dbReference>
<dbReference type="FunFam" id="2.40.40.20:FF:000005">
    <property type="entry name" value="Periplasmic nitrate reductase"/>
    <property type="match status" value="1"/>
</dbReference>
<dbReference type="FunFam" id="3.40.228.10:FF:000001">
    <property type="entry name" value="Periplasmic nitrate reductase"/>
    <property type="match status" value="1"/>
</dbReference>
<dbReference type="Gene3D" id="2.40.40.20">
    <property type="match status" value="1"/>
</dbReference>
<dbReference type="Gene3D" id="3.30.200.210">
    <property type="match status" value="1"/>
</dbReference>
<dbReference type="Gene3D" id="3.40.50.740">
    <property type="match status" value="1"/>
</dbReference>
<dbReference type="Gene3D" id="3.40.228.10">
    <property type="entry name" value="Dimethylsulfoxide Reductase, domain 2"/>
    <property type="match status" value="1"/>
</dbReference>
<dbReference type="HAMAP" id="MF_01630">
    <property type="entry name" value="Nitrate_reduct_NapA"/>
    <property type="match status" value="1"/>
</dbReference>
<dbReference type="InterPro" id="IPR009010">
    <property type="entry name" value="Asp_de-COase-like_dom_sf"/>
</dbReference>
<dbReference type="InterPro" id="IPR041957">
    <property type="entry name" value="CT_Nitrate-R-NapA-like"/>
</dbReference>
<dbReference type="InterPro" id="IPR006657">
    <property type="entry name" value="MoPterin_dinucl-bd_dom"/>
</dbReference>
<dbReference type="InterPro" id="IPR006656">
    <property type="entry name" value="Mopterin_OxRdtase"/>
</dbReference>
<dbReference type="InterPro" id="IPR006963">
    <property type="entry name" value="Mopterin_OxRdtase_4Fe-4S_dom"/>
</dbReference>
<dbReference type="InterPro" id="IPR027467">
    <property type="entry name" value="MopterinOxRdtase_cofactor_BS"/>
</dbReference>
<dbReference type="InterPro" id="IPR010051">
    <property type="entry name" value="Periplasm_NO3_reductase_lsu"/>
</dbReference>
<dbReference type="InterPro" id="IPR050123">
    <property type="entry name" value="Prok_molybdopt-oxidoreductase"/>
</dbReference>
<dbReference type="InterPro" id="IPR006311">
    <property type="entry name" value="TAT_signal"/>
</dbReference>
<dbReference type="InterPro" id="IPR019546">
    <property type="entry name" value="TAT_signal_bac_arc"/>
</dbReference>
<dbReference type="NCBIfam" id="TIGR01706">
    <property type="entry name" value="NAPA"/>
    <property type="match status" value="1"/>
</dbReference>
<dbReference type="NCBIfam" id="NF010055">
    <property type="entry name" value="PRK13532.1"/>
    <property type="match status" value="1"/>
</dbReference>
<dbReference type="NCBIfam" id="TIGR01409">
    <property type="entry name" value="TAT_signal_seq"/>
    <property type="match status" value="1"/>
</dbReference>
<dbReference type="PANTHER" id="PTHR43105:SF11">
    <property type="entry name" value="PERIPLASMIC NITRATE REDUCTASE"/>
    <property type="match status" value="1"/>
</dbReference>
<dbReference type="PANTHER" id="PTHR43105">
    <property type="entry name" value="RESPIRATORY NITRATE REDUCTASE"/>
    <property type="match status" value="1"/>
</dbReference>
<dbReference type="Pfam" id="PF04879">
    <property type="entry name" value="Molybdop_Fe4S4"/>
    <property type="match status" value="1"/>
</dbReference>
<dbReference type="Pfam" id="PF00384">
    <property type="entry name" value="Molybdopterin"/>
    <property type="match status" value="1"/>
</dbReference>
<dbReference type="Pfam" id="PF01568">
    <property type="entry name" value="Molydop_binding"/>
    <property type="match status" value="1"/>
</dbReference>
<dbReference type="SMART" id="SM00926">
    <property type="entry name" value="Molybdop_Fe4S4"/>
    <property type="match status" value="1"/>
</dbReference>
<dbReference type="SUPFAM" id="SSF50692">
    <property type="entry name" value="ADC-like"/>
    <property type="match status" value="1"/>
</dbReference>
<dbReference type="SUPFAM" id="SSF53706">
    <property type="entry name" value="Formate dehydrogenase/DMSO reductase, domains 1-3"/>
    <property type="match status" value="1"/>
</dbReference>
<dbReference type="PROSITE" id="PS51669">
    <property type="entry name" value="4FE4S_MOW_BIS_MGD"/>
    <property type="match status" value="1"/>
</dbReference>
<dbReference type="PROSITE" id="PS00551">
    <property type="entry name" value="MOLYBDOPTERIN_PROK_1"/>
    <property type="match status" value="1"/>
</dbReference>
<dbReference type="PROSITE" id="PS51318">
    <property type="entry name" value="TAT"/>
    <property type="match status" value="1"/>
</dbReference>
<accession>Q8ZNH6</accession>